<keyword id="KW-0066">ATP synthesis</keyword>
<keyword id="KW-0067">ATP-binding</keyword>
<keyword id="KW-0997">Cell inner membrane</keyword>
<keyword id="KW-1003">Cell membrane</keyword>
<keyword id="KW-0139">CF(1)</keyword>
<keyword id="KW-0375">Hydrogen ion transport</keyword>
<keyword id="KW-0406">Ion transport</keyword>
<keyword id="KW-0472">Membrane</keyword>
<keyword id="KW-0547">Nucleotide-binding</keyword>
<keyword id="KW-1278">Translocase</keyword>
<keyword id="KW-0813">Transport</keyword>
<proteinExistence type="inferred from homology"/>
<gene>
    <name evidence="1" type="primary">atpA</name>
    <name type="ordered locus">PSPA7_6358</name>
</gene>
<reference key="1">
    <citation type="submission" date="2007-06" db="EMBL/GenBank/DDBJ databases">
        <authorList>
            <person name="Dodson R.J."/>
            <person name="Harkins D."/>
            <person name="Paulsen I.T."/>
        </authorList>
    </citation>
    <scope>NUCLEOTIDE SEQUENCE [LARGE SCALE GENOMIC DNA]</scope>
    <source>
        <strain>DSM 24068 / PA7</strain>
    </source>
</reference>
<accession>A6VF34</accession>
<sequence length="514" mass="55393">MQQLNPSEISEIIKGRIEKLDVASQARNEGTIVSVSDGIVRIYGLADVMYGEMIEFPGGVYGMALNLEQDSVGAVVLGEYQGLAEGMNAKCTGRILEVPVGPELLGRVVDALGNPIDGKGPIDAKATDAVEKVAPGVIWRKSVDQPVQTGYKSVDAMIPVGRGQRELIIGDRQIGKTALAVDAIINQKDSGIKCVYVAIGQKQSTIANVVRKLEENGALANTIVVAASASESAALQYLAPYSGCTMGEYFRDRGEDALIVYDDLSKQAVAYRQISLLLRRPPGREAYPGDVFYLHSRLLERASRVSEEYVEKFTNGAVTGKTGSLTALPIIETQAGDVSAFVPTNVISITDGQIFLESAMFNSGIRPAVNAGISVSRVGGAAQTKIIKKLSGGIRTALAQYRELAAFAQFASDLDEATRKQLEHGQRVTELMKQKQYAPMSIAEMSLSLYAAERGFLQDVEIAKVGSFEQALISYFQREHAALLAKINEKGDFNDEIDAGIKAGIEKFKATQTW</sequence>
<dbReference type="EC" id="7.1.2.2" evidence="1"/>
<dbReference type="EMBL" id="CP000744">
    <property type="protein sequence ID" value="ABR85441.1"/>
    <property type="molecule type" value="Genomic_DNA"/>
</dbReference>
<dbReference type="RefSeq" id="WP_003097134.1">
    <property type="nucleotide sequence ID" value="NC_009656.1"/>
</dbReference>
<dbReference type="SMR" id="A6VF34"/>
<dbReference type="GeneID" id="77224109"/>
<dbReference type="KEGG" id="pap:PSPA7_6358"/>
<dbReference type="HOGENOM" id="CLU_010091_2_1_6"/>
<dbReference type="Proteomes" id="UP000001582">
    <property type="component" value="Chromosome"/>
</dbReference>
<dbReference type="GO" id="GO:0005886">
    <property type="term" value="C:plasma membrane"/>
    <property type="evidence" value="ECO:0007669"/>
    <property type="project" value="UniProtKB-SubCell"/>
</dbReference>
<dbReference type="GO" id="GO:0045259">
    <property type="term" value="C:proton-transporting ATP synthase complex"/>
    <property type="evidence" value="ECO:0007669"/>
    <property type="project" value="UniProtKB-KW"/>
</dbReference>
<dbReference type="GO" id="GO:0043531">
    <property type="term" value="F:ADP binding"/>
    <property type="evidence" value="ECO:0007669"/>
    <property type="project" value="TreeGrafter"/>
</dbReference>
<dbReference type="GO" id="GO:0005524">
    <property type="term" value="F:ATP binding"/>
    <property type="evidence" value="ECO:0007669"/>
    <property type="project" value="UniProtKB-UniRule"/>
</dbReference>
<dbReference type="GO" id="GO:0046933">
    <property type="term" value="F:proton-transporting ATP synthase activity, rotational mechanism"/>
    <property type="evidence" value="ECO:0007669"/>
    <property type="project" value="UniProtKB-UniRule"/>
</dbReference>
<dbReference type="CDD" id="cd18113">
    <property type="entry name" value="ATP-synt_F1_alpha_C"/>
    <property type="match status" value="1"/>
</dbReference>
<dbReference type="CDD" id="cd18116">
    <property type="entry name" value="ATP-synt_F1_alpha_N"/>
    <property type="match status" value="1"/>
</dbReference>
<dbReference type="CDD" id="cd01132">
    <property type="entry name" value="F1-ATPase_alpha_CD"/>
    <property type="match status" value="1"/>
</dbReference>
<dbReference type="FunFam" id="1.20.150.20:FF:000001">
    <property type="entry name" value="ATP synthase subunit alpha"/>
    <property type="match status" value="1"/>
</dbReference>
<dbReference type="FunFam" id="2.40.30.20:FF:000001">
    <property type="entry name" value="ATP synthase subunit alpha"/>
    <property type="match status" value="1"/>
</dbReference>
<dbReference type="FunFam" id="3.40.50.300:FF:000002">
    <property type="entry name" value="ATP synthase subunit alpha"/>
    <property type="match status" value="1"/>
</dbReference>
<dbReference type="Gene3D" id="2.40.30.20">
    <property type="match status" value="1"/>
</dbReference>
<dbReference type="Gene3D" id="1.20.150.20">
    <property type="entry name" value="ATP synthase alpha/beta chain, C-terminal domain"/>
    <property type="match status" value="1"/>
</dbReference>
<dbReference type="Gene3D" id="3.40.50.300">
    <property type="entry name" value="P-loop containing nucleotide triphosphate hydrolases"/>
    <property type="match status" value="1"/>
</dbReference>
<dbReference type="HAMAP" id="MF_01346">
    <property type="entry name" value="ATP_synth_alpha_bact"/>
    <property type="match status" value="1"/>
</dbReference>
<dbReference type="InterPro" id="IPR023366">
    <property type="entry name" value="ATP_synth_asu-like_sf"/>
</dbReference>
<dbReference type="InterPro" id="IPR000793">
    <property type="entry name" value="ATP_synth_asu_C"/>
</dbReference>
<dbReference type="InterPro" id="IPR038376">
    <property type="entry name" value="ATP_synth_asu_C_sf"/>
</dbReference>
<dbReference type="InterPro" id="IPR033732">
    <property type="entry name" value="ATP_synth_F1_a_nt-bd_dom"/>
</dbReference>
<dbReference type="InterPro" id="IPR005294">
    <property type="entry name" value="ATP_synth_F1_asu"/>
</dbReference>
<dbReference type="InterPro" id="IPR020003">
    <property type="entry name" value="ATPase_a/bsu_AS"/>
</dbReference>
<dbReference type="InterPro" id="IPR004100">
    <property type="entry name" value="ATPase_F1/V1/A1_a/bsu_N"/>
</dbReference>
<dbReference type="InterPro" id="IPR036121">
    <property type="entry name" value="ATPase_F1/V1/A1_a/bsu_N_sf"/>
</dbReference>
<dbReference type="InterPro" id="IPR000194">
    <property type="entry name" value="ATPase_F1/V1/A1_a/bsu_nucl-bd"/>
</dbReference>
<dbReference type="InterPro" id="IPR027417">
    <property type="entry name" value="P-loop_NTPase"/>
</dbReference>
<dbReference type="NCBIfam" id="TIGR00962">
    <property type="entry name" value="atpA"/>
    <property type="match status" value="1"/>
</dbReference>
<dbReference type="NCBIfam" id="NF009884">
    <property type="entry name" value="PRK13343.1"/>
    <property type="match status" value="1"/>
</dbReference>
<dbReference type="PANTHER" id="PTHR48082">
    <property type="entry name" value="ATP SYNTHASE SUBUNIT ALPHA, MITOCHONDRIAL"/>
    <property type="match status" value="1"/>
</dbReference>
<dbReference type="PANTHER" id="PTHR48082:SF2">
    <property type="entry name" value="ATP SYNTHASE SUBUNIT ALPHA, MITOCHONDRIAL"/>
    <property type="match status" value="1"/>
</dbReference>
<dbReference type="Pfam" id="PF00006">
    <property type="entry name" value="ATP-synt_ab"/>
    <property type="match status" value="1"/>
</dbReference>
<dbReference type="Pfam" id="PF00306">
    <property type="entry name" value="ATP-synt_ab_C"/>
    <property type="match status" value="1"/>
</dbReference>
<dbReference type="Pfam" id="PF02874">
    <property type="entry name" value="ATP-synt_ab_N"/>
    <property type="match status" value="1"/>
</dbReference>
<dbReference type="PIRSF" id="PIRSF039088">
    <property type="entry name" value="F_ATPase_subunit_alpha"/>
    <property type="match status" value="1"/>
</dbReference>
<dbReference type="SUPFAM" id="SSF47917">
    <property type="entry name" value="C-terminal domain of alpha and beta subunits of F1 ATP synthase"/>
    <property type="match status" value="1"/>
</dbReference>
<dbReference type="SUPFAM" id="SSF50615">
    <property type="entry name" value="N-terminal domain of alpha and beta subunits of F1 ATP synthase"/>
    <property type="match status" value="1"/>
</dbReference>
<dbReference type="SUPFAM" id="SSF52540">
    <property type="entry name" value="P-loop containing nucleoside triphosphate hydrolases"/>
    <property type="match status" value="1"/>
</dbReference>
<dbReference type="PROSITE" id="PS00152">
    <property type="entry name" value="ATPASE_ALPHA_BETA"/>
    <property type="match status" value="1"/>
</dbReference>
<evidence type="ECO:0000255" key="1">
    <source>
        <dbReference type="HAMAP-Rule" id="MF_01346"/>
    </source>
</evidence>
<organism>
    <name type="scientific">Pseudomonas paraeruginosa (strain DSM 24068 / PA7)</name>
    <name type="common">Pseudomonas aeruginosa (strain PA7)</name>
    <dbReference type="NCBI Taxonomy" id="381754"/>
    <lineage>
        <taxon>Bacteria</taxon>
        <taxon>Pseudomonadati</taxon>
        <taxon>Pseudomonadota</taxon>
        <taxon>Gammaproteobacteria</taxon>
        <taxon>Pseudomonadales</taxon>
        <taxon>Pseudomonadaceae</taxon>
        <taxon>Pseudomonas</taxon>
        <taxon>Pseudomonas paraeruginosa</taxon>
    </lineage>
</organism>
<protein>
    <recommendedName>
        <fullName evidence="1">ATP synthase subunit alpha</fullName>
        <ecNumber evidence="1">7.1.2.2</ecNumber>
    </recommendedName>
    <alternativeName>
        <fullName evidence="1">ATP synthase F1 sector subunit alpha</fullName>
    </alternativeName>
    <alternativeName>
        <fullName evidence="1">F-ATPase subunit alpha</fullName>
    </alternativeName>
</protein>
<feature type="chain" id="PRO_1000067716" description="ATP synthase subunit alpha">
    <location>
        <begin position="1"/>
        <end position="514"/>
    </location>
</feature>
<feature type="binding site" evidence="1">
    <location>
        <begin position="170"/>
        <end position="177"/>
    </location>
    <ligand>
        <name>ATP</name>
        <dbReference type="ChEBI" id="CHEBI:30616"/>
    </ligand>
</feature>
<feature type="site" description="Required for activity" evidence="1">
    <location>
        <position position="374"/>
    </location>
</feature>
<name>ATPA_PSEP7</name>
<comment type="function">
    <text evidence="1">Produces ATP from ADP in the presence of a proton gradient across the membrane. The alpha chain is a regulatory subunit.</text>
</comment>
<comment type="catalytic activity">
    <reaction evidence="1">
        <text>ATP + H2O + 4 H(+)(in) = ADP + phosphate + 5 H(+)(out)</text>
        <dbReference type="Rhea" id="RHEA:57720"/>
        <dbReference type="ChEBI" id="CHEBI:15377"/>
        <dbReference type="ChEBI" id="CHEBI:15378"/>
        <dbReference type="ChEBI" id="CHEBI:30616"/>
        <dbReference type="ChEBI" id="CHEBI:43474"/>
        <dbReference type="ChEBI" id="CHEBI:456216"/>
        <dbReference type="EC" id="7.1.2.2"/>
    </reaction>
</comment>
<comment type="subunit">
    <text evidence="1">F-type ATPases have 2 components, CF(1) - the catalytic core - and CF(0) - the membrane proton channel. CF(1) has five subunits: alpha(3), beta(3), gamma(1), delta(1), epsilon(1). CF(0) has three main subunits: a(1), b(2) and c(9-12). The alpha and beta chains form an alternating ring which encloses part of the gamma chain. CF(1) is attached to CF(0) by a central stalk formed by the gamma and epsilon chains, while a peripheral stalk is formed by the delta and b chains.</text>
</comment>
<comment type="subcellular location">
    <subcellularLocation>
        <location evidence="1">Cell inner membrane</location>
        <topology evidence="1">Peripheral membrane protein</topology>
    </subcellularLocation>
</comment>
<comment type="similarity">
    <text evidence="1">Belongs to the ATPase alpha/beta chains family.</text>
</comment>